<protein>
    <recommendedName>
        <fullName>UDP-glucose 6-dehydrogenase</fullName>
        <shortName>UDP-Glc dehydrogenase</shortName>
        <shortName>UDP-GlcDH</shortName>
        <shortName>UDPGDH</shortName>
        <ecNumber>1.1.1.22</ecNumber>
    </recommendedName>
</protein>
<reference key="1">
    <citation type="journal article" date="1993" name="Mol. Microbiol.">
        <title>Repeat unit polysaccharides of bacteria: a model for polymerization resembling that of ribosomes and fatty acid synthetase, with a novel mechanism for determining chain length.</title>
        <authorList>
            <person name="Bastin D.A."/>
            <person name="Stevenson G."/>
            <person name="Brown P.K."/>
            <person name="Haase A."/>
            <person name="Reeves P.R."/>
        </authorList>
    </citation>
    <scope>NUCLEOTIDE SEQUENCE [GENOMIC DNA]</scope>
    <source>
        <strain>LT2</strain>
    </source>
</reference>
<reference key="2">
    <citation type="journal article" date="2001" name="Nature">
        <title>Complete genome sequence of Salmonella enterica serovar Typhimurium LT2.</title>
        <authorList>
            <person name="McClelland M."/>
            <person name="Sanderson K.E."/>
            <person name="Spieth J."/>
            <person name="Clifton S.W."/>
            <person name="Latreille P."/>
            <person name="Courtney L."/>
            <person name="Porwollik S."/>
            <person name="Ali J."/>
            <person name="Dante M."/>
            <person name="Du F."/>
            <person name="Hou S."/>
            <person name="Layman D."/>
            <person name="Leonard S."/>
            <person name="Nguyen C."/>
            <person name="Scott K."/>
            <person name="Holmes A."/>
            <person name="Grewal N."/>
            <person name="Mulvaney E."/>
            <person name="Ryan E."/>
            <person name="Sun H."/>
            <person name="Florea L."/>
            <person name="Miller W."/>
            <person name="Stoneking T."/>
            <person name="Nhan M."/>
            <person name="Waterston R."/>
            <person name="Wilson R.K."/>
        </authorList>
    </citation>
    <scope>NUCLEOTIDE SEQUENCE [LARGE SCALE GENOMIC DNA]</scope>
    <source>
        <strain>LT2 / SGSC1412 / ATCC 700720</strain>
    </source>
</reference>
<proteinExistence type="inferred from homology"/>
<sequence>MKITISGTGYVGLSNGLLIAQHHDVVALDIVPSRVELLNDRISPIVDKEIQQFLKEDNIRFRATLDKFDAYQNADYVIIATPTDYDPKTNYFNTSSVESVMQDVISINPAAVMIIKSTVPVGFTAAMRQKFATENIIFSPEFLREGKALYDNLYPSRIVIGEQSERAREFAALLQEGAIKQEIPTLFTDSTEAEAIKLFANTYLAMRVAYFNELDSYAETLGLNTRQIIEGVCLDPRIGNHYNNPSFGYGGYCLPKDTKQLLANYQSVPNNIISAIVEANRTRKDFIADAILARKPKVVGIYRLIMKSGSDNFRASSIQGIMKRIKAKGVEVIIYEPVMEEDTFFNSRLERDLHCFKQQADVIISNRMAAELLDVAEKVYTRDLFGSD</sequence>
<evidence type="ECO:0000250" key="1">
    <source>
        <dbReference type="UniProtKB" id="Q0P8H3"/>
    </source>
</evidence>
<evidence type="ECO:0000255" key="2"/>
<evidence type="ECO:0000305" key="3"/>
<accession>Q04873</accession>
<name>UDG_SALTY</name>
<gene>
    <name type="primary">udg</name>
    <name type="synonym">pagA</name>
    <name type="synonym">pmrE</name>
    <name type="ordered locus">STM2080</name>
</gene>
<feature type="chain" id="PRO_0000074047" description="UDP-glucose 6-dehydrogenase">
    <location>
        <begin position="1"/>
        <end position="388"/>
    </location>
</feature>
<feature type="active site" description="Nucleophile" evidence="1">
    <location>
        <position position="253"/>
    </location>
</feature>
<feature type="binding site" evidence="2">
    <location>
        <begin position="2"/>
        <end position="19"/>
    </location>
    <ligand>
        <name>NAD(+)</name>
        <dbReference type="ChEBI" id="CHEBI:57540"/>
    </ligand>
</feature>
<feature type="binding site" evidence="1">
    <location>
        <position position="11"/>
    </location>
    <ligand>
        <name>NAD(+)</name>
        <dbReference type="ChEBI" id="CHEBI:57540"/>
    </ligand>
</feature>
<feature type="binding site" evidence="1">
    <location>
        <position position="29"/>
    </location>
    <ligand>
        <name>NAD(+)</name>
        <dbReference type="ChEBI" id="CHEBI:57540"/>
    </ligand>
</feature>
<feature type="binding site" evidence="1">
    <location>
        <position position="83"/>
    </location>
    <ligand>
        <name>NAD(+)</name>
        <dbReference type="ChEBI" id="CHEBI:57540"/>
    </ligand>
</feature>
<feature type="binding site" evidence="1">
    <location>
        <position position="118"/>
    </location>
    <ligand>
        <name>NAD(+)</name>
        <dbReference type="ChEBI" id="CHEBI:57540"/>
    </ligand>
</feature>
<feature type="binding site" evidence="1">
    <location>
        <begin position="141"/>
        <end position="145"/>
    </location>
    <ligand>
        <name>substrate</name>
    </ligand>
</feature>
<feature type="binding site" evidence="1">
    <location>
        <position position="145"/>
    </location>
    <ligand>
        <name>NAD(+)</name>
        <dbReference type="ChEBI" id="CHEBI:57540"/>
    </ligand>
</feature>
<feature type="binding site" evidence="1">
    <location>
        <position position="197"/>
    </location>
    <ligand>
        <name>substrate</name>
    </ligand>
</feature>
<feature type="binding site" evidence="1">
    <location>
        <position position="201"/>
    </location>
    <ligand>
        <name>substrate</name>
    </ligand>
</feature>
<feature type="binding site" evidence="1">
    <location>
        <begin position="242"/>
        <end position="246"/>
    </location>
    <ligand>
        <name>substrate</name>
    </ligand>
</feature>
<feature type="binding site" evidence="1">
    <location>
        <position position="250"/>
    </location>
    <ligand>
        <name>substrate</name>
    </ligand>
</feature>
<feature type="binding site" evidence="1">
    <location>
        <position position="252"/>
    </location>
    <ligand>
        <name>NAD(+)</name>
        <dbReference type="ChEBI" id="CHEBI:57540"/>
    </ligand>
</feature>
<feature type="binding site" evidence="1">
    <location>
        <position position="256"/>
    </location>
    <ligand>
        <name>NAD(+)</name>
        <dbReference type="ChEBI" id="CHEBI:57540"/>
    </ligand>
</feature>
<feature type="binding site" evidence="1">
    <location>
        <position position="307"/>
    </location>
    <ligand>
        <name>substrate</name>
    </ligand>
</feature>
<feature type="binding site" evidence="1">
    <location>
        <position position="314"/>
    </location>
    <ligand>
        <name>NAD(+)</name>
        <dbReference type="ChEBI" id="CHEBI:57540"/>
    </ligand>
</feature>
<dbReference type="EC" id="1.1.1.22"/>
<dbReference type="EMBL" id="Z17278">
    <property type="protein sequence ID" value="CAA78945.1"/>
    <property type="molecule type" value="Genomic_DNA"/>
</dbReference>
<dbReference type="EMBL" id="AE006468">
    <property type="protein sequence ID" value="AAL20984.1"/>
    <property type="molecule type" value="Genomic_DNA"/>
</dbReference>
<dbReference type="RefSeq" id="NP_461025.1">
    <property type="nucleotide sequence ID" value="NC_003197.2"/>
</dbReference>
<dbReference type="SMR" id="Q04873"/>
<dbReference type="STRING" id="99287.STM2080"/>
<dbReference type="PaxDb" id="99287-STM2080"/>
<dbReference type="GeneID" id="1253601"/>
<dbReference type="KEGG" id="stm:STM2080"/>
<dbReference type="PATRIC" id="fig|99287.12.peg.2202"/>
<dbReference type="HOGENOM" id="CLU_023810_2_0_6"/>
<dbReference type="OMA" id="LFMGFTE"/>
<dbReference type="PhylomeDB" id="Q04873"/>
<dbReference type="BioCyc" id="SENT99287:STM2080-MONOMER"/>
<dbReference type="UniPathway" id="UPA00030"/>
<dbReference type="UniPathway" id="UPA00038">
    <property type="reaction ID" value="UER00491"/>
</dbReference>
<dbReference type="Proteomes" id="UP000001014">
    <property type="component" value="Chromosome"/>
</dbReference>
<dbReference type="GO" id="GO:0051287">
    <property type="term" value="F:NAD binding"/>
    <property type="evidence" value="ECO:0000250"/>
    <property type="project" value="UniProtKB"/>
</dbReference>
<dbReference type="GO" id="GO:0003979">
    <property type="term" value="F:UDP-glucose 6-dehydrogenase activity"/>
    <property type="evidence" value="ECO:0000250"/>
    <property type="project" value="UniProtKB"/>
</dbReference>
<dbReference type="GO" id="GO:0009103">
    <property type="term" value="P:lipopolysaccharide biosynthetic process"/>
    <property type="evidence" value="ECO:0007669"/>
    <property type="project" value="UniProtKB-UniPathway"/>
</dbReference>
<dbReference type="GO" id="GO:0006065">
    <property type="term" value="P:UDP-glucuronate biosynthetic process"/>
    <property type="evidence" value="ECO:0007669"/>
    <property type="project" value="UniProtKB-UniPathway"/>
</dbReference>
<dbReference type="FunFam" id="1.10.1040.10:FF:000026">
    <property type="entry name" value="UDP-glucose 6-dehydrogenase"/>
    <property type="match status" value="1"/>
</dbReference>
<dbReference type="FunFam" id="3.40.50.720:FF:000297">
    <property type="entry name" value="UDP-glucose 6-dehydrogenase"/>
    <property type="match status" value="1"/>
</dbReference>
<dbReference type="FunFam" id="3.40.50.720:FF:000400">
    <property type="entry name" value="UDP-glucose 6-dehydrogenase"/>
    <property type="match status" value="1"/>
</dbReference>
<dbReference type="Gene3D" id="1.10.1040.10">
    <property type="entry name" value="N-(1-d-carboxylethyl)-l-norvaline Dehydrogenase, domain 2"/>
    <property type="match status" value="1"/>
</dbReference>
<dbReference type="Gene3D" id="3.40.50.720">
    <property type="entry name" value="NAD(P)-binding Rossmann-like Domain"/>
    <property type="match status" value="2"/>
</dbReference>
<dbReference type="InterPro" id="IPR008927">
    <property type="entry name" value="6-PGluconate_DH-like_C_sf"/>
</dbReference>
<dbReference type="InterPro" id="IPR013328">
    <property type="entry name" value="6PGD_dom2"/>
</dbReference>
<dbReference type="InterPro" id="IPR036291">
    <property type="entry name" value="NAD(P)-bd_dom_sf"/>
</dbReference>
<dbReference type="InterPro" id="IPR017476">
    <property type="entry name" value="UDP-Glc/GDP-Man"/>
</dbReference>
<dbReference type="InterPro" id="IPR014027">
    <property type="entry name" value="UDP-Glc/GDP-Man_DH_C"/>
</dbReference>
<dbReference type="InterPro" id="IPR036220">
    <property type="entry name" value="UDP-Glc/GDP-Man_DH_C_sf"/>
</dbReference>
<dbReference type="InterPro" id="IPR014026">
    <property type="entry name" value="UDP-Glc/GDP-Man_DH_dimer"/>
</dbReference>
<dbReference type="InterPro" id="IPR001732">
    <property type="entry name" value="UDP-Glc/GDP-Man_DH_N"/>
</dbReference>
<dbReference type="InterPro" id="IPR028357">
    <property type="entry name" value="UDPglc_DH_bac"/>
</dbReference>
<dbReference type="NCBIfam" id="TIGR03026">
    <property type="entry name" value="NDP-sugDHase"/>
    <property type="match status" value="1"/>
</dbReference>
<dbReference type="NCBIfam" id="NF011631">
    <property type="entry name" value="PRK15057.1"/>
    <property type="match status" value="1"/>
</dbReference>
<dbReference type="PANTHER" id="PTHR43750:SF2">
    <property type="entry name" value="UDP-GLUCOSE 6-DEHYDROGENASE"/>
    <property type="match status" value="1"/>
</dbReference>
<dbReference type="PANTHER" id="PTHR43750">
    <property type="entry name" value="UDP-GLUCOSE 6-DEHYDROGENASE TUAD"/>
    <property type="match status" value="1"/>
</dbReference>
<dbReference type="Pfam" id="PF00984">
    <property type="entry name" value="UDPG_MGDP_dh"/>
    <property type="match status" value="1"/>
</dbReference>
<dbReference type="Pfam" id="PF03720">
    <property type="entry name" value="UDPG_MGDP_dh_C"/>
    <property type="match status" value="1"/>
</dbReference>
<dbReference type="Pfam" id="PF03721">
    <property type="entry name" value="UDPG_MGDP_dh_N"/>
    <property type="match status" value="1"/>
</dbReference>
<dbReference type="PIRSF" id="PIRSF500134">
    <property type="entry name" value="UDPglc_DH_bac"/>
    <property type="match status" value="1"/>
</dbReference>
<dbReference type="PIRSF" id="PIRSF000124">
    <property type="entry name" value="UDPglc_GDPman_dh"/>
    <property type="match status" value="1"/>
</dbReference>
<dbReference type="SMART" id="SM00984">
    <property type="entry name" value="UDPG_MGDP_dh_C"/>
    <property type="match status" value="1"/>
</dbReference>
<dbReference type="SUPFAM" id="SSF48179">
    <property type="entry name" value="6-phosphogluconate dehydrogenase C-terminal domain-like"/>
    <property type="match status" value="1"/>
</dbReference>
<dbReference type="SUPFAM" id="SSF51735">
    <property type="entry name" value="NAD(P)-binding Rossmann-fold domains"/>
    <property type="match status" value="1"/>
</dbReference>
<dbReference type="SUPFAM" id="SSF52413">
    <property type="entry name" value="UDP-glucose/GDP-mannose dehydrogenase C-terminal domain"/>
    <property type="match status" value="1"/>
</dbReference>
<keyword id="KW-0520">NAD</keyword>
<keyword id="KW-0560">Oxidoreductase</keyword>
<keyword id="KW-1185">Reference proteome</keyword>
<organism>
    <name type="scientific">Salmonella typhimurium (strain LT2 / SGSC1412 / ATCC 700720)</name>
    <dbReference type="NCBI Taxonomy" id="99287"/>
    <lineage>
        <taxon>Bacteria</taxon>
        <taxon>Pseudomonadati</taxon>
        <taxon>Pseudomonadota</taxon>
        <taxon>Gammaproteobacteria</taxon>
        <taxon>Enterobacterales</taxon>
        <taxon>Enterobacteriaceae</taxon>
        <taxon>Salmonella</taxon>
    </lineage>
</organism>
<comment type="catalytic activity">
    <reaction>
        <text>UDP-alpha-D-glucose + 2 NAD(+) + H2O = UDP-alpha-D-glucuronate + 2 NADH + 3 H(+)</text>
        <dbReference type="Rhea" id="RHEA:23596"/>
        <dbReference type="ChEBI" id="CHEBI:15377"/>
        <dbReference type="ChEBI" id="CHEBI:15378"/>
        <dbReference type="ChEBI" id="CHEBI:57540"/>
        <dbReference type="ChEBI" id="CHEBI:57945"/>
        <dbReference type="ChEBI" id="CHEBI:58052"/>
        <dbReference type="ChEBI" id="CHEBI:58885"/>
        <dbReference type="EC" id="1.1.1.22"/>
    </reaction>
</comment>
<comment type="pathway">
    <text>Nucleotide-sugar biosynthesis; UDP-alpha-D-glucuronate biosynthesis; UDP-alpha-D-glucuronate from UDP-alpha-D-glucose: step 1/1.</text>
</comment>
<comment type="pathway">
    <text>Bacterial outer membrane biogenesis; lipopolysaccharide biosynthesis.</text>
</comment>
<comment type="similarity">
    <text evidence="3">Belongs to the UDP-glucose/GDP-mannose dehydrogenase family.</text>
</comment>